<proteinExistence type="inferred from homology"/>
<evidence type="ECO:0000255" key="1">
    <source>
        <dbReference type="HAMAP-Rule" id="MF_01263"/>
    </source>
</evidence>
<reference key="1">
    <citation type="journal article" date="2004" name="J. Mol. Microbiol. Biotechnol.">
        <title>The complete genome sequence of Bacillus licheniformis DSM13, an organism with great industrial potential.</title>
        <authorList>
            <person name="Veith B."/>
            <person name="Herzberg C."/>
            <person name="Steckel S."/>
            <person name="Feesche J."/>
            <person name="Maurer K.H."/>
            <person name="Ehrenreich P."/>
            <person name="Baeumer S."/>
            <person name="Henne A."/>
            <person name="Liesegang H."/>
            <person name="Merkl R."/>
            <person name="Ehrenreich A."/>
            <person name="Gottschalk G."/>
        </authorList>
    </citation>
    <scope>NUCLEOTIDE SEQUENCE [LARGE SCALE GENOMIC DNA]</scope>
    <source>
        <strain>ATCC 14580 / DSM 13 / JCM 2505 / CCUG 7422 / NBRC 12200 / NCIMB 9375 / NCTC 10341 / NRRL NRS-1264 / Gibson 46</strain>
    </source>
</reference>
<reference key="2">
    <citation type="journal article" date="2004" name="Genome Biol.">
        <title>Complete genome sequence of the industrial bacterium Bacillus licheniformis and comparisons with closely related Bacillus species.</title>
        <authorList>
            <person name="Rey M.W."/>
            <person name="Ramaiya P."/>
            <person name="Nelson B.A."/>
            <person name="Brody-Karpin S.D."/>
            <person name="Zaretsky E.J."/>
            <person name="Tang M."/>
            <person name="Lopez de Leon A."/>
            <person name="Xiang H."/>
            <person name="Gusti V."/>
            <person name="Clausen I.G."/>
            <person name="Olsen P.B."/>
            <person name="Rasmussen M.D."/>
            <person name="Andersen J.T."/>
            <person name="Joergensen P.L."/>
            <person name="Larsen T.S."/>
            <person name="Sorokin A."/>
            <person name="Bolotin A."/>
            <person name="Lapidus A."/>
            <person name="Galleron N."/>
            <person name="Ehrlich S.D."/>
            <person name="Berka R.M."/>
        </authorList>
    </citation>
    <scope>NUCLEOTIDE SEQUENCE [LARGE SCALE GENOMIC DNA]</scope>
    <source>
        <strain>ATCC 14580 / DSM 13 / JCM 2505 / CCUG 7422 / NBRC 12200 / NCIMB 9375 / NCTC 10341 / NRRL NRS-1264 / Gibson 46</strain>
    </source>
</reference>
<sequence length="397" mass="45117">MEDLFLKALPLLRELKKHGWQAYFVGGAVRDAQMNRDVGDIDIATDASPEEIEAIFPKTVDVGKEHGTIIVLFEGESYEVTTFRAELEYEDYRRPSGVQFIKSLKEDLKRRDLTINAMAMDEEGRLIDYFGGLRDIRERLIQTVGDPAERFHEDALRMLRALRFMSQLEFELSPNTKKAICENRPLLAHISTERKTVEFEKLLKGKAAGRALEAAAETGLYKELPGLDGKKERVLAARAFPFYQLQKSADIWAAFIHMISINPAEAHRFLKGWKLPGKVIRQALHTAERIDQKWDAVSMYEAGEETLLAASAIRSLRDKQAIDEEQLAEIRQSYQALPIKSLKDLAVSGSDLLNFRKKPAGKWVSDDLKRIERAVLNGELANQKKAIEEWLDSCSQI</sequence>
<organism>
    <name type="scientific">Bacillus licheniformis (strain ATCC 14580 / DSM 13 / JCM 2505 / CCUG 7422 / NBRC 12200 / NCIMB 9375 / NCTC 10341 / NRRL NRS-1264 / Gibson 46)</name>
    <dbReference type="NCBI Taxonomy" id="279010"/>
    <lineage>
        <taxon>Bacteria</taxon>
        <taxon>Bacillati</taxon>
        <taxon>Bacillota</taxon>
        <taxon>Bacilli</taxon>
        <taxon>Bacillales</taxon>
        <taxon>Bacillaceae</taxon>
        <taxon>Bacillus</taxon>
    </lineage>
</organism>
<accession>Q65I54</accession>
<accession>Q62TK3</accession>
<feature type="chain" id="PRO_0000139031" description="CCA-adding enzyme">
    <location>
        <begin position="1"/>
        <end position="397"/>
    </location>
</feature>
<feature type="binding site" evidence="1">
    <location>
        <position position="27"/>
    </location>
    <ligand>
        <name>ATP</name>
        <dbReference type="ChEBI" id="CHEBI:30616"/>
    </ligand>
</feature>
<feature type="binding site" evidence="1">
    <location>
        <position position="27"/>
    </location>
    <ligand>
        <name>CTP</name>
        <dbReference type="ChEBI" id="CHEBI:37563"/>
    </ligand>
</feature>
<feature type="binding site" evidence="1">
    <location>
        <position position="30"/>
    </location>
    <ligand>
        <name>ATP</name>
        <dbReference type="ChEBI" id="CHEBI:30616"/>
    </ligand>
</feature>
<feature type="binding site" evidence="1">
    <location>
        <position position="30"/>
    </location>
    <ligand>
        <name>CTP</name>
        <dbReference type="ChEBI" id="CHEBI:37563"/>
    </ligand>
</feature>
<feature type="binding site" evidence="1">
    <location>
        <position position="40"/>
    </location>
    <ligand>
        <name>Mg(2+)</name>
        <dbReference type="ChEBI" id="CHEBI:18420"/>
    </ligand>
</feature>
<feature type="binding site" evidence="1">
    <location>
        <position position="42"/>
    </location>
    <ligand>
        <name>Mg(2+)</name>
        <dbReference type="ChEBI" id="CHEBI:18420"/>
    </ligand>
</feature>
<feature type="binding site" evidence="1">
    <location>
        <position position="111"/>
    </location>
    <ligand>
        <name>ATP</name>
        <dbReference type="ChEBI" id="CHEBI:30616"/>
    </ligand>
</feature>
<feature type="binding site" evidence="1">
    <location>
        <position position="111"/>
    </location>
    <ligand>
        <name>CTP</name>
        <dbReference type="ChEBI" id="CHEBI:37563"/>
    </ligand>
</feature>
<feature type="binding site" evidence="1">
    <location>
        <position position="154"/>
    </location>
    <ligand>
        <name>ATP</name>
        <dbReference type="ChEBI" id="CHEBI:30616"/>
    </ligand>
</feature>
<feature type="binding site" evidence="1">
    <location>
        <position position="154"/>
    </location>
    <ligand>
        <name>CTP</name>
        <dbReference type="ChEBI" id="CHEBI:37563"/>
    </ligand>
</feature>
<feature type="binding site" evidence="1">
    <location>
        <position position="157"/>
    </location>
    <ligand>
        <name>ATP</name>
        <dbReference type="ChEBI" id="CHEBI:30616"/>
    </ligand>
</feature>
<feature type="binding site" evidence="1">
    <location>
        <position position="157"/>
    </location>
    <ligand>
        <name>CTP</name>
        <dbReference type="ChEBI" id="CHEBI:37563"/>
    </ligand>
</feature>
<feature type="binding site" evidence="1">
    <location>
        <position position="160"/>
    </location>
    <ligand>
        <name>ATP</name>
        <dbReference type="ChEBI" id="CHEBI:30616"/>
    </ligand>
</feature>
<feature type="binding site" evidence="1">
    <location>
        <position position="160"/>
    </location>
    <ligand>
        <name>CTP</name>
        <dbReference type="ChEBI" id="CHEBI:37563"/>
    </ligand>
</feature>
<feature type="binding site" evidence="1">
    <location>
        <position position="163"/>
    </location>
    <ligand>
        <name>ATP</name>
        <dbReference type="ChEBI" id="CHEBI:30616"/>
    </ligand>
</feature>
<feature type="binding site" evidence="1">
    <location>
        <position position="163"/>
    </location>
    <ligand>
        <name>CTP</name>
        <dbReference type="ChEBI" id="CHEBI:37563"/>
    </ligand>
</feature>
<keyword id="KW-0067">ATP-binding</keyword>
<keyword id="KW-0460">Magnesium</keyword>
<keyword id="KW-0479">Metal-binding</keyword>
<keyword id="KW-0547">Nucleotide-binding</keyword>
<keyword id="KW-0548">Nucleotidyltransferase</keyword>
<keyword id="KW-1185">Reference proteome</keyword>
<keyword id="KW-0692">RNA repair</keyword>
<keyword id="KW-0694">RNA-binding</keyword>
<keyword id="KW-0808">Transferase</keyword>
<keyword id="KW-0819">tRNA processing</keyword>
<gene>
    <name evidence="1" type="primary">cca</name>
    <name type="ordered locus">BLi02380</name>
    <name type="ordered locus">BL02754</name>
</gene>
<comment type="function">
    <text evidence="1">Catalyzes the addition and repair of the essential 3'-terminal CCA sequence in tRNAs without using a nucleic acid template. Adds these three nucleotides in the order of C, C, and A to the tRNA nucleotide-73, using CTP and ATP as substrates and producing inorganic pyrophosphate. tRNA 3'-terminal CCA addition is required both for tRNA processing and repair. Also involved in tRNA surveillance by mediating tandem CCA addition to generate a CCACCA at the 3' terminus of unstable tRNAs. While stable tRNAs receive only 3'-terminal CCA, unstable tRNAs are marked with CCACCA and rapidly degraded.</text>
</comment>
<comment type="catalytic activity">
    <reaction evidence="1">
        <text>a tRNA precursor + 2 CTP + ATP = a tRNA with a 3' CCA end + 3 diphosphate</text>
        <dbReference type="Rhea" id="RHEA:14433"/>
        <dbReference type="Rhea" id="RHEA-COMP:10465"/>
        <dbReference type="Rhea" id="RHEA-COMP:10468"/>
        <dbReference type="ChEBI" id="CHEBI:30616"/>
        <dbReference type="ChEBI" id="CHEBI:33019"/>
        <dbReference type="ChEBI" id="CHEBI:37563"/>
        <dbReference type="ChEBI" id="CHEBI:74896"/>
        <dbReference type="ChEBI" id="CHEBI:83071"/>
        <dbReference type="EC" id="2.7.7.72"/>
    </reaction>
</comment>
<comment type="catalytic activity">
    <reaction evidence="1">
        <text>a tRNA with a 3' CCA end + 2 CTP + ATP = a tRNA with a 3' CCACCA end + 3 diphosphate</text>
        <dbReference type="Rhea" id="RHEA:76235"/>
        <dbReference type="Rhea" id="RHEA-COMP:10468"/>
        <dbReference type="Rhea" id="RHEA-COMP:18655"/>
        <dbReference type="ChEBI" id="CHEBI:30616"/>
        <dbReference type="ChEBI" id="CHEBI:33019"/>
        <dbReference type="ChEBI" id="CHEBI:37563"/>
        <dbReference type="ChEBI" id="CHEBI:83071"/>
        <dbReference type="ChEBI" id="CHEBI:195187"/>
    </reaction>
    <physiologicalReaction direction="left-to-right" evidence="1">
        <dbReference type="Rhea" id="RHEA:76236"/>
    </physiologicalReaction>
</comment>
<comment type="cofactor">
    <cofactor evidence="1">
        <name>Mg(2+)</name>
        <dbReference type="ChEBI" id="CHEBI:18420"/>
    </cofactor>
</comment>
<comment type="subunit">
    <text evidence="1">Homodimer.</text>
</comment>
<comment type="miscellaneous">
    <text evidence="1">A single active site specifically recognizes both ATP and CTP and is responsible for their addition.</text>
</comment>
<comment type="similarity">
    <text evidence="1">Belongs to the tRNA nucleotidyltransferase/poly(A) polymerase family. Bacterial CCA-adding enzyme type 3 subfamily.</text>
</comment>
<dbReference type="EC" id="2.7.7.72" evidence="1"/>
<dbReference type="EMBL" id="AE017333">
    <property type="protein sequence ID" value="AAU41260.1"/>
    <property type="molecule type" value="Genomic_DNA"/>
</dbReference>
<dbReference type="EMBL" id="CP000002">
    <property type="protein sequence ID" value="AAU23906.1"/>
    <property type="molecule type" value="Genomic_DNA"/>
</dbReference>
<dbReference type="RefSeq" id="WP_009328003.1">
    <property type="nucleotide sequence ID" value="NC_006322.1"/>
</dbReference>
<dbReference type="SMR" id="Q65I54"/>
<dbReference type="STRING" id="279010.BL02754"/>
<dbReference type="KEGG" id="bld:BLi02380"/>
<dbReference type="KEGG" id="bli:BL02754"/>
<dbReference type="eggNOG" id="COG0617">
    <property type="taxonomic scope" value="Bacteria"/>
</dbReference>
<dbReference type="HOGENOM" id="CLU_015961_3_0_9"/>
<dbReference type="Proteomes" id="UP000000606">
    <property type="component" value="Chromosome"/>
</dbReference>
<dbReference type="Bgee" id="BL02754">
    <property type="expression patterns" value="Expressed in oral cirrus and 8 other cell types or tissues"/>
</dbReference>
<dbReference type="GO" id="GO:0005524">
    <property type="term" value="F:ATP binding"/>
    <property type="evidence" value="ECO:0007669"/>
    <property type="project" value="UniProtKB-UniRule"/>
</dbReference>
<dbReference type="GO" id="GO:0004810">
    <property type="term" value="F:CCA tRNA nucleotidyltransferase activity"/>
    <property type="evidence" value="ECO:0007669"/>
    <property type="project" value="UniProtKB-UniRule"/>
</dbReference>
<dbReference type="GO" id="GO:0000287">
    <property type="term" value="F:magnesium ion binding"/>
    <property type="evidence" value="ECO:0007669"/>
    <property type="project" value="UniProtKB-UniRule"/>
</dbReference>
<dbReference type="GO" id="GO:0000049">
    <property type="term" value="F:tRNA binding"/>
    <property type="evidence" value="ECO:0007669"/>
    <property type="project" value="UniProtKB-UniRule"/>
</dbReference>
<dbReference type="GO" id="GO:0042245">
    <property type="term" value="P:RNA repair"/>
    <property type="evidence" value="ECO:0007669"/>
    <property type="project" value="UniProtKB-KW"/>
</dbReference>
<dbReference type="GO" id="GO:0001680">
    <property type="term" value="P:tRNA 3'-terminal CCA addition"/>
    <property type="evidence" value="ECO:0007669"/>
    <property type="project" value="UniProtKB-UniRule"/>
</dbReference>
<dbReference type="CDD" id="cd05398">
    <property type="entry name" value="NT_ClassII-CCAase"/>
    <property type="match status" value="1"/>
</dbReference>
<dbReference type="Gene3D" id="1.10.110.30">
    <property type="match status" value="1"/>
</dbReference>
<dbReference type="Gene3D" id="1.10.246.80">
    <property type="match status" value="1"/>
</dbReference>
<dbReference type="Gene3D" id="1.20.58.560">
    <property type="match status" value="1"/>
</dbReference>
<dbReference type="Gene3D" id="3.30.460.10">
    <property type="entry name" value="Beta Polymerase, domain 2"/>
    <property type="match status" value="1"/>
</dbReference>
<dbReference type="HAMAP" id="MF_01263">
    <property type="entry name" value="CCA_bact_type3"/>
    <property type="match status" value="1"/>
</dbReference>
<dbReference type="InterPro" id="IPR050264">
    <property type="entry name" value="Bact_CCA-adding_enz_type3_sf"/>
</dbReference>
<dbReference type="InterPro" id="IPR032810">
    <property type="entry name" value="CCA-adding_enz_C"/>
</dbReference>
<dbReference type="InterPro" id="IPR023068">
    <property type="entry name" value="CCA-adding_enz_firmicutes"/>
</dbReference>
<dbReference type="InterPro" id="IPR043519">
    <property type="entry name" value="NT_sf"/>
</dbReference>
<dbReference type="InterPro" id="IPR002646">
    <property type="entry name" value="PolA_pol_head_dom"/>
</dbReference>
<dbReference type="InterPro" id="IPR032828">
    <property type="entry name" value="PolyA_RNA-bd"/>
</dbReference>
<dbReference type="NCBIfam" id="NF009814">
    <property type="entry name" value="PRK13299.1"/>
    <property type="match status" value="1"/>
</dbReference>
<dbReference type="PANTHER" id="PTHR46173">
    <property type="entry name" value="CCA TRNA NUCLEOTIDYLTRANSFERASE 1, MITOCHONDRIAL"/>
    <property type="match status" value="1"/>
</dbReference>
<dbReference type="PANTHER" id="PTHR46173:SF1">
    <property type="entry name" value="CCA TRNA NUCLEOTIDYLTRANSFERASE 1, MITOCHONDRIAL"/>
    <property type="match status" value="1"/>
</dbReference>
<dbReference type="Pfam" id="PF01743">
    <property type="entry name" value="PolyA_pol"/>
    <property type="match status" value="1"/>
</dbReference>
<dbReference type="Pfam" id="PF12627">
    <property type="entry name" value="PolyA_pol_RNAbd"/>
    <property type="match status" value="1"/>
</dbReference>
<dbReference type="Pfam" id="PF13735">
    <property type="entry name" value="tRNA_NucTran2_2"/>
    <property type="match status" value="1"/>
</dbReference>
<dbReference type="SUPFAM" id="SSF81301">
    <property type="entry name" value="Nucleotidyltransferase"/>
    <property type="match status" value="1"/>
</dbReference>
<dbReference type="SUPFAM" id="SSF81891">
    <property type="entry name" value="Poly A polymerase C-terminal region-like"/>
    <property type="match status" value="1"/>
</dbReference>
<protein>
    <recommendedName>
        <fullName evidence="1">CCA-adding enzyme</fullName>
        <ecNumber evidence="1">2.7.7.72</ecNumber>
    </recommendedName>
    <alternativeName>
        <fullName evidence="1">CCA tRNA nucleotidyltransferase</fullName>
    </alternativeName>
    <alternativeName>
        <fullName evidence="1">tRNA CCA-pyrophosphorylase</fullName>
    </alternativeName>
    <alternativeName>
        <fullName evidence="1">tRNA adenylyl-/cytidylyl- transferase</fullName>
    </alternativeName>
    <alternativeName>
        <fullName evidence="1">tRNA nucleotidyltransferase</fullName>
    </alternativeName>
    <alternativeName>
        <fullName evidence="1">tRNA-NT</fullName>
    </alternativeName>
</protein>
<name>CCA_BACLD</name>